<evidence type="ECO:0000250" key="1"/>
<evidence type="ECO:0000255" key="2"/>
<evidence type="ECO:0000305" key="3"/>
<name>UFM1_CHLRE</name>
<keyword id="KW-1017">Isopeptide bond</keyword>
<keyword id="KW-0833">Ubl conjugation pathway</keyword>
<sequence length="96" mass="10380">MSQQAAAVTKVTFKVTLTSDPKLPFRVFSVPEEAPFTAVLKFAAEEFKVPAQTSAIITNDGVGINPQQIAGNVFLKHGSELRLIPRDRVGGISRAR</sequence>
<comment type="function">
    <text evidence="1">Ubiquitin-like modifier protein which binds to a number of as yet unidentified target proteins.</text>
</comment>
<comment type="similarity">
    <text evidence="3">Belongs to the UFM1 family.</text>
</comment>
<gene>
    <name type="primary">PR46a</name>
</gene>
<dbReference type="EMBL" id="AF387366">
    <property type="protein sequence ID" value="AAK70874.1"/>
    <property type="molecule type" value="Genomic_DNA"/>
</dbReference>
<dbReference type="RefSeq" id="XP_001696636.1">
    <property type="nucleotide sequence ID" value="XM_001696584.1"/>
</dbReference>
<dbReference type="SMR" id="Q94EY2"/>
<dbReference type="PaxDb" id="3055-EDP08613"/>
<dbReference type="eggNOG" id="KOG3483">
    <property type="taxonomic scope" value="Eukaryota"/>
</dbReference>
<dbReference type="HOGENOM" id="CLU_175114_0_0_1"/>
<dbReference type="GO" id="GO:0071569">
    <property type="term" value="P:protein ufmylation"/>
    <property type="evidence" value="ECO:0007669"/>
    <property type="project" value="InterPro"/>
</dbReference>
<dbReference type="CDD" id="cd01766">
    <property type="entry name" value="Ubl_UFM1"/>
    <property type="match status" value="1"/>
</dbReference>
<dbReference type="FunFam" id="3.10.20.90:FF:000044">
    <property type="entry name" value="Ubiquitin-fold modifier 1"/>
    <property type="match status" value="1"/>
</dbReference>
<dbReference type="Gene3D" id="3.10.20.90">
    <property type="entry name" value="Phosphatidylinositol 3-kinase Catalytic Subunit, Chain A, domain 1"/>
    <property type="match status" value="1"/>
</dbReference>
<dbReference type="InterPro" id="IPR029071">
    <property type="entry name" value="Ubiquitin-like_domsf"/>
</dbReference>
<dbReference type="InterPro" id="IPR005375">
    <property type="entry name" value="UFM1"/>
</dbReference>
<dbReference type="PANTHER" id="PTHR15825">
    <property type="entry name" value="UBIQUITIN-FOLD MODIFIER 1"/>
    <property type="match status" value="1"/>
</dbReference>
<dbReference type="PANTHER" id="PTHR15825:SF0">
    <property type="entry name" value="UBIQUITIN-FOLD MODIFIER 1"/>
    <property type="match status" value="1"/>
</dbReference>
<dbReference type="Pfam" id="PF03671">
    <property type="entry name" value="Ufm1"/>
    <property type="match status" value="1"/>
</dbReference>
<dbReference type="PIRSF" id="PIRSF038027">
    <property type="entry name" value="Ubiquitin-like_Ufm1"/>
    <property type="match status" value="1"/>
</dbReference>
<dbReference type="SUPFAM" id="SSF54236">
    <property type="entry name" value="Ubiquitin-like"/>
    <property type="match status" value="1"/>
</dbReference>
<reference key="1">
    <citation type="journal article" date="2002" name="Genetics">
        <title>Genetic structure of the mating-type locus of Chlamydomonas reinhardtii.</title>
        <authorList>
            <person name="Ferris P.J."/>
            <person name="Armbrust E.V."/>
            <person name="Goodenough U.W."/>
        </authorList>
    </citation>
    <scope>NUCLEOTIDE SEQUENCE [GENOMIC DNA]</scope>
    <source>
        <strain>CC-620</strain>
    </source>
</reference>
<protein>
    <recommendedName>
        <fullName>Ubiquitin-fold modifier 1</fullName>
    </recommendedName>
</protein>
<organism>
    <name type="scientific">Chlamydomonas reinhardtii</name>
    <name type="common">Chlamydomonas smithii</name>
    <dbReference type="NCBI Taxonomy" id="3055"/>
    <lineage>
        <taxon>Eukaryota</taxon>
        <taxon>Viridiplantae</taxon>
        <taxon>Chlorophyta</taxon>
        <taxon>core chlorophytes</taxon>
        <taxon>Chlorophyceae</taxon>
        <taxon>CS clade</taxon>
        <taxon>Chlamydomonadales</taxon>
        <taxon>Chlamydomonadaceae</taxon>
        <taxon>Chlamydomonas</taxon>
    </lineage>
</organism>
<accession>Q94EY2</accession>
<proteinExistence type="inferred from homology"/>
<feature type="chain" id="PRO_0000042146" description="Ubiquitin-fold modifier 1">
    <location>
        <begin position="1"/>
        <end position="90"/>
    </location>
</feature>
<feature type="propeptide" id="PRO_0000042147" description="Removed in mature form" evidence="1">
    <location>
        <begin position="91"/>
        <end position="96"/>
    </location>
</feature>
<feature type="cross-link" description="Glycyl lysine isopeptide (Gly-Lys) (interchain with K-? in acceptor proteins)" evidence="2">
    <location>
        <position position="90"/>
    </location>
</feature>